<gene>
    <name evidence="28 30" type="primary">EPOR</name>
</gene>
<name>EPOR_HUMAN</name>
<feature type="signal peptide" evidence="3">
    <location>
        <begin position="1"/>
        <end position="24"/>
    </location>
</feature>
<feature type="chain" id="PRO_0000010868" description="Erythropoietin receptor">
    <location>
        <begin position="25"/>
        <end position="508"/>
    </location>
</feature>
<feature type="topological domain" description="Extracellular" evidence="3">
    <location>
        <begin position="25"/>
        <end position="250"/>
    </location>
</feature>
<feature type="transmembrane region" description="Helical" evidence="3">
    <location>
        <begin position="251"/>
        <end position="273"/>
    </location>
</feature>
<feature type="topological domain" description="Cytoplasmic" evidence="3">
    <location>
        <begin position="274"/>
        <end position="508"/>
    </location>
</feature>
<feature type="domain" description="Fibronectin type-III" evidence="4">
    <location>
        <begin position="147"/>
        <end position="247"/>
    </location>
</feature>
<feature type="region of interest" description="Required for high-affinity SOCS3 binding" evidence="12">
    <location>
        <begin position="454"/>
        <end position="456"/>
    </location>
</feature>
<feature type="region of interest" description="Disordered" evidence="5">
    <location>
        <begin position="467"/>
        <end position="494"/>
    </location>
</feature>
<feature type="short sequence motif" description="WSXWS motif" evidence="25">
    <location>
        <begin position="233"/>
        <end position="237"/>
    </location>
</feature>
<feature type="short sequence motif" description="Box 1 motif" evidence="2">
    <location>
        <begin position="282"/>
        <end position="290"/>
    </location>
</feature>
<feature type="short sequence motif" description="ITIM motif" evidence="1">
    <location>
        <begin position="452"/>
        <end position="457"/>
    </location>
</feature>
<feature type="site" description="Required for ligand binding" evidence="24">
    <location>
        <position position="117"/>
    </location>
</feature>
<feature type="modified residue" description="Phosphotyrosine; by JAK2" evidence="1">
    <location>
        <position position="368"/>
    </location>
</feature>
<feature type="modified residue" description="Phosphotyrosine; by JAK2" evidence="10">
    <location>
        <position position="426"/>
    </location>
</feature>
<feature type="modified residue" description="Phosphotyrosine; by JAK2" evidence="1">
    <location>
        <position position="454"/>
    </location>
</feature>
<feature type="modified residue" description="Phosphotyrosine; by JAK2" evidence="1">
    <location>
        <position position="456"/>
    </location>
</feature>
<feature type="modified residue" description="Phosphotyrosine; by JAK2" evidence="1">
    <location>
        <position position="468"/>
    </location>
</feature>
<feature type="modified residue" description="Phosphotyrosine; by JAK2" evidence="1">
    <location>
        <position position="485"/>
    </location>
</feature>
<feature type="modified residue" description="Phosphotyrosine; by JAK2" evidence="1">
    <location>
        <position position="489"/>
    </location>
</feature>
<feature type="modified residue" description="Phosphotyrosine; by JAK2" evidence="1">
    <location>
        <position position="504"/>
    </location>
</feature>
<feature type="glycosylation site" description="N-linked (GlcNAc...) asparagine" evidence="3">
    <location>
        <position position="76"/>
    </location>
</feature>
<feature type="disulfide bond" evidence="25 31 32">
    <location>
        <begin position="52"/>
        <end position="62"/>
    </location>
</feature>
<feature type="disulfide bond" evidence="25 31 32">
    <location>
        <begin position="91"/>
        <end position="107"/>
    </location>
</feature>
<feature type="cross-link" description="Glycyl lysine isopeptide (Lys-Gly) (interchain with G-Cter in ubiquitin)" evidence="1">
    <location>
        <position position="281"/>
    </location>
</feature>
<feature type="cross-link" description="Glycyl lysine isopeptide (Lys-Gly) (interchain with G-Cter in ubiquitin)" evidence="1">
    <location>
        <position position="453"/>
    </location>
</feature>
<feature type="splice variant" id="VSP_009508" description="In isoform EPOR-S." evidence="27">
    <original>VEILEGRTECVLSNLRGRTRYTFAVRARMAEPSFGGFWSAWSEPVS</original>
    <variation>GTVFLSPDWLSSTRARPHVIYFCLLRVPRPDSAPRWRSWRAAPSVC</variation>
    <location>
        <begin position="196"/>
        <end position="241"/>
    </location>
</feature>
<feature type="splice variant" id="VSP_009509" description="In isoform EPOR-S." evidence="27">
    <location>
        <begin position="242"/>
        <end position="508"/>
    </location>
</feature>
<feature type="splice variant" id="VSP_009510" description="In isoform EPOR-T." evidence="27">
    <original>LWLYQNDGCLWWSPCTPFTEDPP</original>
    <variation>VGGLVVPSVPGLPCFLQPNCRPL</variation>
    <location>
        <begin position="306"/>
        <end position="328"/>
    </location>
</feature>
<feature type="splice variant" id="VSP_009511" description="In isoform EPOR-T." evidence="27">
    <location>
        <begin position="329"/>
        <end position="508"/>
    </location>
</feature>
<feature type="sequence variant" id="VAR_033919" description="In dbSNP:rs35423344.">
    <original>P</original>
    <variation>A</variation>
    <location>
        <position position="380"/>
    </location>
</feature>
<feature type="sequence variant" id="VAR_027372" description="In ECYT1 and erythroleukemia; dbSNP:rs62638745." evidence="23">
    <original>N</original>
    <variation>S</variation>
    <location>
        <position position="487"/>
    </location>
</feature>
<feature type="sequence variant" id="VAR_027373" description="In dbSNP:rs142094773." evidence="18 21">
    <original>P</original>
    <variation>S</variation>
    <location>
        <position position="488"/>
    </location>
</feature>
<feature type="mutagenesis site" description="Little effect on EPO binding." evidence="24">
    <original>T</original>
    <variation>A</variation>
    <location>
        <position position="114"/>
    </location>
</feature>
<feature type="mutagenesis site" description="Little effect on EPO binding." evidence="24">
    <original>S</original>
    <variation>A</variation>
    <location>
        <position position="115"/>
    </location>
</feature>
<feature type="mutagenesis site" description="10-fold reduction in EPO binding." evidence="24">
    <original>S</original>
    <variation>A</variation>
    <location>
        <position position="116"/>
    </location>
</feature>
<feature type="mutagenesis site" description="Greatly reduced EPO binding." evidence="24">
    <original>F</original>
    <variation>A</variation>
    <variation>L</variation>
    <location>
        <position position="117"/>
    </location>
</feature>
<feature type="mutagenesis site" description="60-fold reduction in EPO binding." evidence="24">
    <original>F</original>
    <variation>W</variation>
    <location>
        <position position="117"/>
    </location>
</feature>
<feature type="mutagenesis site" description="8-fold reduction in EPO binding." evidence="24">
    <original>F</original>
    <variation>Y</variation>
    <location>
        <position position="117"/>
    </location>
</feature>
<feature type="mutagenesis site" description="16-fold reduction in EPO binding." evidence="24">
    <original>V</original>
    <variation>A</variation>
    <location>
        <position position="118"/>
    </location>
</feature>
<feature type="mutagenesis site" description="Some reduction in EPO binding." evidence="24">
    <original>L</original>
    <variation>A</variation>
    <location>
        <position position="120"/>
    </location>
</feature>
<feature type="mutagenesis site" description="Little effect on EPO binding." evidence="24">
    <original>E</original>
    <variation>A</variation>
    <location>
        <position position="121"/>
    </location>
</feature>
<feature type="mutagenesis site" description="Little effect on EPO binding." evidence="24">
    <original>R</original>
    <variation>A</variation>
    <location>
        <position position="165"/>
    </location>
</feature>
<feature type="mutagenesis site" description="Little effect on EPO binding." evidence="24">
    <original>M</original>
    <variation>A</variation>
    <location>
        <position position="174"/>
    </location>
</feature>
<feature type="mutagenesis site" description="16-fold reduction in EPO binding." evidence="24">
    <original>S</original>
    <variation>A</variation>
    <location>
        <position position="176"/>
    </location>
</feature>
<feature type="mutagenesis site" description="Little effect on EPO binding." evidence="24">
    <original>H</original>
    <variation>A</variation>
    <location>
        <position position="177"/>
    </location>
</feature>
<feature type="mutagenesis site" description="Little effect on EPO binding." evidence="24">
    <original>R</original>
    <variation>A</variation>
    <location>
        <position position="179"/>
    </location>
</feature>
<feature type="mutagenesis site" description="Decreased phosphorylation by JAK2 and association with the ECS(SOCS2) complex." evidence="10">
    <original>Y</original>
    <variation>F</variation>
    <location>
        <position position="426"/>
    </location>
</feature>
<feature type="mutagenesis site" description="Some loss of SOCS3 binding." evidence="12">
    <original>Y</original>
    <variation>F</variation>
    <location>
        <position position="454"/>
    </location>
</feature>
<feature type="mutagenesis site" description="Inhibition of STAT1/STAT3 activity. No effect on STAT5 activity. Some loss of SOCS3 binding." evidence="9 12">
    <original>Y</original>
    <variation>F</variation>
    <location>
        <position position="456"/>
    </location>
</feature>
<feature type="mutagenesis site" description="No effect on STAT1/STAT3 nor STAT5 activity." evidence="9">
    <original>Y</original>
    <variation>F</variation>
    <location>
        <position position="468"/>
    </location>
</feature>
<feature type="sequence conflict" description="In Ref. 1; no nucleotide entry." evidence="29" ref="1">
    <original>A</original>
    <variation>R</variation>
    <location>
        <position position="102"/>
    </location>
</feature>
<feature type="sequence conflict" description="In Ref. 1; no nucleotide entry." evidence="29" ref="1">
    <original>GA</original>
    <variation>RP</variation>
    <location>
        <begin position="189"/>
        <end position="190"/>
    </location>
</feature>
<feature type="sequence conflict" description="In Ref. 1; no nucleotide entry." evidence="29" ref="1">
    <original>T</original>
    <variation>E</variation>
    <location>
        <position position="244"/>
    </location>
</feature>
<feature type="helix" evidence="35">
    <location>
        <begin position="33"/>
        <end position="45"/>
    </location>
</feature>
<feature type="strand" evidence="38">
    <location>
        <begin position="47"/>
        <end position="49"/>
    </location>
</feature>
<feature type="strand" evidence="35">
    <location>
        <begin position="51"/>
        <end position="58"/>
    </location>
</feature>
<feature type="strand" evidence="35">
    <location>
        <begin position="61"/>
        <end position="67"/>
    </location>
</feature>
<feature type="strand" evidence="35">
    <location>
        <begin position="76"/>
        <end position="83"/>
    </location>
</feature>
<feature type="strand" evidence="40">
    <location>
        <begin position="84"/>
        <end position="86"/>
    </location>
</feature>
<feature type="strand" evidence="35">
    <location>
        <begin position="89"/>
        <end position="91"/>
    </location>
</feature>
<feature type="strand" evidence="35">
    <location>
        <begin position="93"/>
        <end position="98"/>
    </location>
</feature>
<feature type="turn" evidence="35">
    <location>
        <begin position="99"/>
        <end position="101"/>
    </location>
</feature>
<feature type="strand" evidence="35">
    <location>
        <begin position="102"/>
        <end position="108"/>
    </location>
</feature>
<feature type="helix" evidence="35">
    <location>
        <begin position="111"/>
        <end position="113"/>
    </location>
</feature>
<feature type="strand" evidence="35">
    <location>
        <begin position="116"/>
        <end position="118"/>
    </location>
</feature>
<feature type="strand" evidence="35">
    <location>
        <begin position="120"/>
        <end position="126"/>
    </location>
</feature>
<feature type="turn" evidence="34">
    <location>
        <begin position="127"/>
        <end position="129"/>
    </location>
</feature>
<feature type="strand" evidence="35">
    <location>
        <begin position="131"/>
        <end position="137"/>
    </location>
</feature>
<feature type="helix" evidence="35">
    <location>
        <begin position="139"/>
        <end position="141"/>
    </location>
</feature>
<feature type="strand" evidence="35">
    <location>
        <begin position="142"/>
        <end position="144"/>
    </location>
</feature>
<feature type="strand" evidence="35">
    <location>
        <begin position="149"/>
        <end position="155"/>
    </location>
</feature>
<feature type="strand" evidence="41">
    <location>
        <begin position="157"/>
        <end position="160"/>
    </location>
</feature>
<feature type="strand" evidence="35">
    <location>
        <begin position="162"/>
        <end position="167"/>
    </location>
</feature>
<feature type="strand" evidence="36">
    <location>
        <begin position="169"/>
        <end position="171"/>
    </location>
</feature>
<feature type="helix" evidence="35">
    <location>
        <begin position="175"/>
        <end position="177"/>
    </location>
</feature>
<feature type="strand" evidence="35">
    <location>
        <begin position="178"/>
        <end position="185"/>
    </location>
</feature>
<feature type="strand" evidence="35">
    <location>
        <begin position="188"/>
        <end position="190"/>
    </location>
</feature>
<feature type="strand" evidence="35">
    <location>
        <begin position="195"/>
        <end position="198"/>
    </location>
</feature>
<feature type="strand" evidence="35">
    <location>
        <begin position="204"/>
        <end position="207"/>
    </location>
</feature>
<feature type="strand" evidence="35">
    <location>
        <begin position="212"/>
        <end position="224"/>
    </location>
</feature>
<feature type="turn" evidence="35">
    <location>
        <begin position="226"/>
        <end position="228"/>
    </location>
</feature>
<feature type="strand" evidence="35">
    <location>
        <begin position="240"/>
        <end position="244"/>
    </location>
</feature>
<feature type="turn" evidence="37">
    <location>
        <begin position="245"/>
        <end position="247"/>
    </location>
</feature>
<feature type="helix" evidence="37">
    <location>
        <begin position="250"/>
        <end position="282"/>
    </location>
</feature>
<feature type="helix" evidence="39">
    <location>
        <begin position="289"/>
        <end position="293"/>
    </location>
</feature>
<feature type="turn" evidence="39">
    <location>
        <begin position="294"/>
        <end position="299"/>
    </location>
</feature>
<feature type="helix" evidence="39">
    <location>
        <begin position="304"/>
        <end position="311"/>
    </location>
</feature>
<feature type="strand" evidence="39">
    <location>
        <begin position="316"/>
        <end position="320"/>
    </location>
</feature>
<reference key="1">
    <citation type="journal article" date="1990" name="Blood">
        <title>The gene for the human erythropoietin receptor: analysis of the coding sequence and assignment to chromosome 19p.</title>
        <authorList>
            <person name="Winkelmann J.C."/>
            <person name="Penny L.A."/>
            <person name="Deaven L.L."/>
            <person name="Forget B.G."/>
            <person name="Jenkins R.B."/>
        </authorList>
    </citation>
    <scope>NUCLEOTIDE SEQUENCE [GENOMIC DNA]</scope>
    <scope>FUNCTION</scope>
</reference>
<reference key="2">
    <citation type="journal article" date="1990" name="Blood">
        <title>Human erythropoietin receptor: cloning, expression, and biologic characterization.</title>
        <authorList>
            <person name="Jones S.S."/>
            <person name="D'Andrea A.D."/>
            <person name="Haines L.L."/>
            <person name="Wong G.G."/>
        </authorList>
    </citation>
    <scope>NUCLEOTIDE SEQUENCE [MRNA] (ISOFORM EPOR-F)</scope>
    <scope>FUNCTION</scope>
    <scope>TISSUE SPECIFICITY</scope>
    <source>
        <tissue>Erythroleukemia</tissue>
        <tissue>Fetal liver</tissue>
    </source>
</reference>
<reference key="3">
    <citation type="journal article" date="1991" name="Blood">
        <title>Cloning of the human erythropoietin receptor gene.</title>
        <authorList>
            <person name="Noguchi C.T."/>
            <person name="Bae K.S."/>
            <person name="Chin K."/>
            <person name="Wada Y."/>
            <person name="Schechter A.N."/>
            <person name="Hankins W.D."/>
        </authorList>
    </citation>
    <scope>NUCLEOTIDE SEQUENCE [GENOMIC DNA]</scope>
    <source>
        <tissue>Placenta</tissue>
    </source>
</reference>
<reference key="4">
    <citation type="journal article" date="1991" name="Exp. Hematol.">
        <title>The erythropoietin receptor gene: cloning and identification of multiple transcripts in an erythroid cell line OCIM1.</title>
        <authorList>
            <person name="Ehrenman K."/>
            <person name="St John T."/>
        </authorList>
    </citation>
    <scope>NUCLEOTIDE SEQUENCE [MRNA] (ISOFORM EPOR-F)</scope>
    <source>
        <tissue>Erythroleukemia</tissue>
    </source>
</reference>
<reference key="5">
    <citation type="journal article" date="1992" name="Science">
        <title>A truncated erythropoietin receptor that fails to prevent programmed cell death of erythroid cells.</title>
        <authorList>
            <person name="Nakamura Y."/>
            <person name="Komatsu N."/>
            <person name="Nakauchi H."/>
        </authorList>
    </citation>
    <scope>NUCLEOTIDE SEQUENCE [MRNA] (ISOFORMS EPOR-F; EPOR-S AND EPOR-T)</scope>
    <scope>FUNCTION (ISOFORM EPOR-T)</scope>
    <scope>TISSUE SPECIFICITY</scope>
    <source>
        <tissue>Bone marrow</tissue>
        <tissue>Megakaryoblast</tissue>
    </source>
</reference>
<reference key="6">
    <citation type="journal article" date="2004" name="Nat. Genet.">
        <title>Complete sequencing and characterization of 21,243 full-length human cDNAs.</title>
        <authorList>
            <person name="Ota T."/>
            <person name="Suzuki Y."/>
            <person name="Nishikawa T."/>
            <person name="Otsuki T."/>
            <person name="Sugiyama T."/>
            <person name="Irie R."/>
            <person name="Wakamatsu A."/>
            <person name="Hayashi K."/>
            <person name="Sato H."/>
            <person name="Nagai K."/>
            <person name="Kimura K."/>
            <person name="Makita H."/>
            <person name="Sekine M."/>
            <person name="Obayashi M."/>
            <person name="Nishi T."/>
            <person name="Shibahara T."/>
            <person name="Tanaka T."/>
            <person name="Ishii S."/>
            <person name="Yamamoto J."/>
            <person name="Saito K."/>
            <person name="Kawai Y."/>
            <person name="Isono Y."/>
            <person name="Nakamura Y."/>
            <person name="Nagahari K."/>
            <person name="Murakami K."/>
            <person name="Yasuda T."/>
            <person name="Iwayanagi T."/>
            <person name="Wagatsuma M."/>
            <person name="Shiratori A."/>
            <person name="Sudo H."/>
            <person name="Hosoiri T."/>
            <person name="Kaku Y."/>
            <person name="Kodaira H."/>
            <person name="Kondo H."/>
            <person name="Sugawara M."/>
            <person name="Takahashi M."/>
            <person name="Kanda K."/>
            <person name="Yokoi T."/>
            <person name="Furuya T."/>
            <person name="Kikkawa E."/>
            <person name="Omura Y."/>
            <person name="Abe K."/>
            <person name="Kamihara K."/>
            <person name="Katsuta N."/>
            <person name="Sato K."/>
            <person name="Tanikawa M."/>
            <person name="Yamazaki M."/>
            <person name="Ninomiya K."/>
            <person name="Ishibashi T."/>
            <person name="Yamashita H."/>
            <person name="Murakawa K."/>
            <person name="Fujimori K."/>
            <person name="Tanai H."/>
            <person name="Kimata M."/>
            <person name="Watanabe M."/>
            <person name="Hiraoka S."/>
            <person name="Chiba Y."/>
            <person name="Ishida S."/>
            <person name="Ono Y."/>
            <person name="Takiguchi S."/>
            <person name="Watanabe S."/>
            <person name="Yosida M."/>
            <person name="Hotuta T."/>
            <person name="Kusano J."/>
            <person name="Kanehori K."/>
            <person name="Takahashi-Fujii A."/>
            <person name="Hara H."/>
            <person name="Tanase T.-O."/>
            <person name="Nomura Y."/>
            <person name="Togiya S."/>
            <person name="Komai F."/>
            <person name="Hara R."/>
            <person name="Takeuchi K."/>
            <person name="Arita M."/>
            <person name="Imose N."/>
            <person name="Musashino K."/>
            <person name="Yuuki H."/>
            <person name="Oshima A."/>
            <person name="Sasaki N."/>
            <person name="Aotsuka S."/>
            <person name="Yoshikawa Y."/>
            <person name="Matsunawa H."/>
            <person name="Ichihara T."/>
            <person name="Shiohata N."/>
            <person name="Sano S."/>
            <person name="Moriya S."/>
            <person name="Momiyama H."/>
            <person name="Satoh N."/>
            <person name="Takami S."/>
            <person name="Terashima Y."/>
            <person name="Suzuki O."/>
            <person name="Nakagawa S."/>
            <person name="Senoh A."/>
            <person name="Mizoguchi H."/>
            <person name="Goto Y."/>
            <person name="Shimizu F."/>
            <person name="Wakebe H."/>
            <person name="Hishigaki H."/>
            <person name="Watanabe T."/>
            <person name="Sugiyama A."/>
            <person name="Takemoto M."/>
            <person name="Kawakami B."/>
            <person name="Yamazaki M."/>
            <person name="Watanabe K."/>
            <person name="Kumagai A."/>
            <person name="Itakura S."/>
            <person name="Fukuzumi Y."/>
            <person name="Fujimori Y."/>
            <person name="Komiyama M."/>
            <person name="Tashiro H."/>
            <person name="Tanigami A."/>
            <person name="Fujiwara T."/>
            <person name="Ono T."/>
            <person name="Yamada K."/>
            <person name="Fujii Y."/>
            <person name="Ozaki K."/>
            <person name="Hirao M."/>
            <person name="Ohmori Y."/>
            <person name="Kawabata A."/>
            <person name="Hikiji T."/>
            <person name="Kobatake N."/>
            <person name="Inagaki H."/>
            <person name="Ikema Y."/>
            <person name="Okamoto S."/>
            <person name="Okitani R."/>
            <person name="Kawakami T."/>
            <person name="Noguchi S."/>
            <person name="Itoh T."/>
            <person name="Shigeta K."/>
            <person name="Senba T."/>
            <person name="Matsumura K."/>
            <person name="Nakajima Y."/>
            <person name="Mizuno T."/>
            <person name="Morinaga M."/>
            <person name="Sasaki M."/>
            <person name="Togashi T."/>
            <person name="Oyama M."/>
            <person name="Hata H."/>
            <person name="Watanabe M."/>
            <person name="Komatsu T."/>
            <person name="Mizushima-Sugano J."/>
            <person name="Satoh T."/>
            <person name="Shirai Y."/>
            <person name="Takahashi Y."/>
            <person name="Nakagawa K."/>
            <person name="Okumura K."/>
            <person name="Nagase T."/>
            <person name="Nomura N."/>
            <person name="Kikuchi H."/>
            <person name="Masuho Y."/>
            <person name="Yamashita R."/>
            <person name="Nakai K."/>
            <person name="Yada T."/>
            <person name="Nakamura Y."/>
            <person name="Ohara O."/>
            <person name="Isogai T."/>
            <person name="Sugano S."/>
        </authorList>
    </citation>
    <scope>NUCLEOTIDE SEQUENCE [LARGE SCALE MRNA] (ISOFORM EPOR-F)</scope>
    <source>
        <tissue>Caudate nucleus</tissue>
    </source>
</reference>
<reference key="7">
    <citation type="submission" date="2005-07" db="EMBL/GenBank/DDBJ databases">
        <authorList>
            <person name="Mural R.J."/>
            <person name="Istrail S."/>
            <person name="Sutton G.G."/>
            <person name="Florea L."/>
            <person name="Halpern A.L."/>
            <person name="Mobarry C.M."/>
            <person name="Lippert R."/>
            <person name="Walenz B."/>
            <person name="Shatkay H."/>
            <person name="Dew I."/>
            <person name="Miller J.R."/>
            <person name="Flanigan M.J."/>
            <person name="Edwards N.J."/>
            <person name="Bolanos R."/>
            <person name="Fasulo D."/>
            <person name="Halldorsson B.V."/>
            <person name="Hannenhalli S."/>
            <person name="Turner R."/>
            <person name="Yooseph S."/>
            <person name="Lu F."/>
            <person name="Nusskern D.R."/>
            <person name="Shue B.C."/>
            <person name="Zheng X.H."/>
            <person name="Zhong F."/>
            <person name="Delcher A.L."/>
            <person name="Huson D.H."/>
            <person name="Kravitz S.A."/>
            <person name="Mouchard L."/>
            <person name="Reinert K."/>
            <person name="Remington K.A."/>
            <person name="Clark A.G."/>
            <person name="Waterman M.S."/>
            <person name="Eichler E.E."/>
            <person name="Adams M.D."/>
            <person name="Hunkapiller M.W."/>
            <person name="Myers E.W."/>
            <person name="Venter J.C."/>
        </authorList>
    </citation>
    <scope>NUCLEOTIDE SEQUENCE [LARGE SCALE GENOMIC DNA]</scope>
</reference>
<reference key="8">
    <citation type="journal article" date="2004" name="Genome Res.">
        <title>The status, quality, and expansion of the NIH full-length cDNA project: the Mammalian Gene Collection (MGC).</title>
        <authorList>
            <consortium name="The MGC Project Team"/>
        </authorList>
    </citation>
    <scope>NUCLEOTIDE SEQUENCE [LARGE SCALE MRNA] (ISOFORM EPOR-F)</scope>
    <source>
        <tissue>Brain</tissue>
    </source>
</reference>
<reference key="9">
    <citation type="journal article" date="1991" name="Blood">
        <title>Cloning of the gene encoding the human erythropoietin receptor.</title>
        <authorList>
            <person name="Maouche L."/>
            <person name="Tournamille C."/>
            <person name="Hattab C."/>
            <person name="Boffa G."/>
            <person name="Cartron J.-P."/>
            <person name="Chretien S."/>
        </authorList>
    </citation>
    <scope>NUCLEOTIDE SEQUENCE [GENOMIC DNA] OF 1-96</scope>
    <source>
        <tissue>Placenta</tissue>
    </source>
</reference>
<reference key="10">
    <citation type="journal article" date="1991" name="Genomics">
        <title>Genomic organization of the human erythropoietin receptor gene.</title>
        <authorList>
            <person name="Penny L.A."/>
            <person name="Forget B.G."/>
        </authorList>
    </citation>
    <scope>NUCLEOTIDE SEQUENCE [GENOMIC DNA] OF 1-17</scope>
</reference>
<reference key="11">
    <citation type="journal article" date="1991" name="Gene">
        <title>Isolation of a cDNA encoding a potential soluble receptor for human erythropoietin.</title>
        <authorList>
            <person name="Todokoro K."/>
            <person name="Kuramochi S."/>
            <person name="Nagasawa T."/>
            <person name="Abe T."/>
            <person name="Ikawa Y."/>
        </authorList>
    </citation>
    <scope>PARTIAL NUCLEOTIDE SEQUENCE [MRNA] (EPOR-S)</scope>
    <source>
        <tissue>Erythroid cell</tissue>
    </source>
</reference>
<reference key="12">
    <citation type="journal article" date="2002" name="Blood">
        <title>Identification of the human erythropoietin receptor region required for Stat1 and Stat3 activation.</title>
        <authorList>
            <person name="Kirito K."/>
            <person name="Nakajima K."/>
            <person name="Watanabe T."/>
            <person name="Uchida M."/>
            <person name="Tanaka M."/>
            <person name="Ozawa K."/>
            <person name="Komatsu N."/>
        </authorList>
    </citation>
    <scope>FUNCTION</scope>
    <scope>MUTAGENESIS OF TYR-456 AND TYR-468</scope>
</reference>
<reference key="13">
    <citation type="journal article" date="1995" name="J. Biol. Chem.">
        <title>Involvement of SH2-containing phosphotyrosine phosphatase Syp in erythropoietin receptor signal transduction pathways.</title>
        <authorList>
            <person name="Tauchi T."/>
            <person name="Feng G.-S."/>
            <person name="Shen R."/>
            <person name="Hoatlin M."/>
            <person name="Bagby G.C. Jr."/>
            <person name="Kabat D."/>
            <person name="Lu L."/>
            <person name="Broxmeyer H.E."/>
        </authorList>
    </citation>
    <scope>INTERACTION WITH PTPN11</scope>
</reference>
<reference key="14">
    <citation type="journal article" date="1996" name="J. Biol. Chem.">
        <title>Identification of a critical ligand binding determinant of the human erythropoietin receptor. Evidence for common ligand binding motifs in the cytokine receptor family.</title>
        <authorList>
            <person name="Middleton S.A."/>
            <person name="Johnson D.L."/>
            <person name="Jin R."/>
            <person name="McMahon F.J."/>
            <person name="Collins A."/>
            <person name="Tullai J."/>
            <person name="Gruninger R.H."/>
            <person name="Jolliffe L.K."/>
            <person name="Mulcahy L.S."/>
        </authorList>
    </citation>
    <scope>FUNCTION</scope>
    <scope>MUTAGENESIS OF THR-114; SER-115; SER-116; PHE-117; VAL-118; LEU-120; GLU-121; ARG-165; MET-174; SER-176; HIS-177 AND ARG-179</scope>
</reference>
<reference key="15">
    <citation type="journal article" date="2001" name="Eur. J. Haematol.">
        <title>Increased cell surface expression of C-terminal truncated erythropoietin receptors in polycythemia.</title>
        <authorList>
            <person name="Motohashi T."/>
            <person name="Nakamura Y."/>
            <person name="Osawa M."/>
            <person name="Hiroyama T."/>
            <person name="Iwama A."/>
            <person name="Shibuya A."/>
            <person name="Nakauchi H."/>
        </authorList>
    </citation>
    <scope>SUBCELLULAR LOCATION (ISOFORM EPOR-S)</scope>
</reference>
<reference key="16">
    <citation type="journal article" date="2001" name="Nat. Cell Biol.">
        <title>Design and application of a cytokine-receptor-based interaction trap.</title>
        <authorList>
            <person name="Eyckerman S."/>
            <person name="Verhee A."/>
            <person name="der Heyden J.V."/>
            <person name="Lemmens I."/>
            <person name="Ostade X.V."/>
            <person name="Vandekerckhove J."/>
            <person name="Tavernier J."/>
        </authorList>
    </citation>
    <scope>UBIQUITINATION</scope>
    <scope>PHOSPHORYLATION AT TYR-426</scope>
    <scope>MUTAGENESIS OF TYR-426</scope>
</reference>
<reference key="17">
    <citation type="journal article" date="2002" name="Eur. J. Biochem.">
        <title>A new high affinity binding site for suppressor of cytokine signaling-3 on the erythropoietin receptor.</title>
        <authorList>
            <person name="Hoertner M."/>
            <person name="Nielsch U."/>
            <person name="Mayr L.M."/>
            <person name="Heinrich P.C."/>
            <person name="Haan S."/>
        </authorList>
    </citation>
    <scope>INTERACTION WITH SOCS3</scope>
    <scope>PHOSPHORYLATION</scope>
    <scope>MUTAGENESIS OF TYR-454 AND TYR-456</scope>
</reference>
<reference key="18">
    <citation type="journal article" date="2003" name="J. Biol. Chem.">
        <title>Erythropoietin receptors associate with a ubiquitin ligase, p33RUL, and require its activity for erythropoietin-induced proliferation.</title>
        <authorList>
            <person name="Friedman A.D."/>
            <person name="Nimbalkar D."/>
            <person name="Quelle F.W."/>
        </authorList>
    </citation>
    <scope>UBIQUITINATION</scope>
</reference>
<reference key="19">
    <citation type="journal article" date="1999" name="Leukemia">
        <title>APS, an adaptor protein containing pleckstrin homology (PH) and Src homology-2 (SH2) domains inhibits the JAK-STAT pathway in collaboration with c-Cbl.</title>
        <authorList>
            <person name="Wakioka T."/>
            <person name="Sasaki A."/>
            <person name="Mitsui K."/>
            <person name="Yokouchi M."/>
            <person name="Inoue A."/>
            <person name="Komiya S."/>
            <person name="Yoshimura A."/>
        </authorList>
    </citation>
    <scope>PHOSPHORYLATION</scope>
    <scope>INTERACTION WITH SH2B2</scope>
</reference>
<reference key="20">
    <citation type="journal article" date="2002" name="J. Biol. Chem.">
        <title>Cloning and characterization of a family of proteins associated with Mpl.</title>
        <authorList>
            <person name="Meunier C.F."/>
            <person name="Bordereaux D."/>
            <person name="Porteu F."/>
            <person name="Gisselbrecht S."/>
            <person name="Chretien S."/>
            <person name="Courtois G."/>
        </authorList>
    </citation>
    <scope>INTERACTION WITH ATXN2L</scope>
</reference>
<reference key="21">
    <citation type="journal article" date="2014" name="J. Exp. Med.">
        <title>RHEX, a novel regulator of human erythroid progenitor cell expansion and erythroblast development.</title>
        <authorList>
            <person name="Verma R."/>
            <person name="Su S."/>
            <person name="McCrann D.J."/>
            <person name="Green J.M."/>
            <person name="Leu K."/>
            <person name="Young P.R."/>
            <person name="Schatz P.J."/>
            <person name="Silva J.C."/>
            <person name="Stokes M.P."/>
            <person name="Wojchowski D.M."/>
        </authorList>
    </citation>
    <scope>INTERACTION WITH RHEX</scope>
</reference>
<reference key="22">
    <citation type="journal article" date="1996" name="Science">
        <title>Functional mimicry of a protein hormone by a peptide agonist: the EPO receptor complex at 2.8 A.</title>
        <authorList>
            <person name="Livnah O."/>
            <person name="Stura E.A."/>
            <person name="Johnson D.L."/>
            <person name="Middleton S.A."/>
            <person name="Mulcahy L.S."/>
            <person name="Wrighton N.C."/>
            <person name="Dower W.J."/>
            <person name="Jolliffe L.K."/>
            <person name="Wilson I.A."/>
        </authorList>
    </citation>
    <scope>X-RAY CRYSTALLOGRAPHY (2.8 ANGSTROMS) OF 34-244</scope>
</reference>
<reference key="23">
    <citation type="journal article" date="1998" name="Nat. Struct. Biol.">
        <title>An antagonist peptide-EPO receptor complex suggests that receptor dimerization is not sufficient for activation.</title>
        <authorList>
            <person name="Livnah O."/>
            <person name="Johnson D.L."/>
            <person name="Stura E.A."/>
            <person name="Farrell F.X."/>
            <person name="Barbone F.P."/>
            <person name="You Y."/>
            <person name="Liu K.D."/>
            <person name="Goldsmith M.A."/>
            <person name="He W."/>
            <person name="Krause C.D."/>
            <person name="Pestka S."/>
            <person name="Jolliffe L.K."/>
            <person name="Wilson I.A."/>
        </authorList>
    </citation>
    <scope>X-RAY CRYSTALLOGRAPHY (2.7 ANGSTROMS) OF 34-244</scope>
</reference>
<reference evidence="31 32" key="24">
    <citation type="journal article" date="1998" name="Nature">
        <title>Efficiency of signalling through cytokine receptors depends critically on receptor orientation.</title>
        <authorList>
            <person name="Syed R.S."/>
            <person name="Reid S.W."/>
            <person name="Li C."/>
            <person name="Cheetham J.C."/>
            <person name="Aoki K.H."/>
            <person name="Liu B."/>
            <person name="Zhan H."/>
            <person name="Osslund T.D."/>
            <person name="Chirino A.J."/>
            <person name="Zhang J."/>
            <person name="Finer-Moore J."/>
            <person name="Elliott S."/>
            <person name="Sitney K."/>
            <person name="Katz B.A."/>
            <person name="Matthews D.J."/>
            <person name="Wendoloski J.J."/>
            <person name="Egrie J."/>
            <person name="Stroud R.M."/>
        </authorList>
    </citation>
    <scope>X-RAY CRYSTALLOGRAPHY (1.9 ANGSTROMS) OF 32-244 IN COMPLEX WITH EPO</scope>
    <scope>FUNCTION</scope>
    <scope>SUBUNIT</scope>
    <scope>DISULFIDE BONDS</scope>
</reference>
<reference key="25">
    <citation type="journal article" date="1999" name="Protein Eng.">
        <title>Engineering a soluble extracellular erythropoietin receptor (EPObp) in Pichia pastoris to eliminate microheterogeneity, and its complex with erythropoietin.</title>
        <authorList>
            <person name="Zhan H."/>
            <person name="Liu B."/>
            <person name="Reid S.W."/>
            <person name="Aoki K.H."/>
            <person name="Li C."/>
            <person name="Syed R.S."/>
            <person name="Karkaria C."/>
            <person name="Koe G."/>
            <person name="Sitney K."/>
            <person name="Hayenga K."/>
            <person name="Mistry F."/>
            <person name="Savel L."/>
            <person name="Dreyer M."/>
            <person name="Katz B.A."/>
            <person name="Schreurs J."/>
            <person name="Matthews D.J."/>
            <person name="Cheetham J.C."/>
            <person name="Egrie J."/>
            <person name="Giebel L.B."/>
            <person name="Stroud R.M."/>
        </authorList>
    </citation>
    <scope>X-RAY CRYSTALLOGRAPHY (2.8 ANGSTROMS) OF 22-249 IN COMPLEX WITH EPO</scope>
    <scope>FUNCTION</scope>
    <scope>SUBUNIT</scope>
</reference>
<reference key="26">
    <citation type="journal article" date="1999" name="Science">
        <title>Crystallographic evidence for preformed dimers of erythropoietin receptor before ligand activation.</title>
        <authorList>
            <person name="Livnah O."/>
            <person name="Stura E.A."/>
            <person name="Middleton S.A."/>
            <person name="Johnson D.L."/>
            <person name="Jolliffe L.K."/>
            <person name="Wilson I.A."/>
        </authorList>
    </citation>
    <scope>X-RAY CRYSTALLOGRAPHY (2.4 ANGSTROMS) OF 34-246</scope>
    <scope>SUBUNIT</scope>
</reference>
<reference evidence="33" key="27">
    <citation type="journal article" date="2019" name="Nat. Commun.">
        <title>Structural insights into substrate recognition by the SOCS2 E3 ubiquitin ligase.</title>
        <authorList>
            <person name="Kung W.W."/>
            <person name="Ramachandran S."/>
            <person name="Makukhin N."/>
            <person name="Bruno E."/>
            <person name="Ciulli A."/>
        </authorList>
    </citation>
    <scope>X-RAY CRYSTALLOGRAPHY (1.98 ANGSTROMS) OF 422-432 IN COMPLEX SOCS2 WITH ELOB AND ELOC</scope>
    <scope>UBIQUITINATION</scope>
</reference>
<reference key="28">
    <citation type="journal article" date="1993" name="Proc. Natl. Acad. Sci. U.S.A.">
        <title>Truncated erythropoietin receptor causes dominantly inherited benign human erythrocytosis.</title>
        <authorList>
            <person name="de la Chapelle A."/>
            <person name="Traskelin A.-L."/>
            <person name="Juvonen E."/>
        </authorList>
    </citation>
    <scope>INVOLVEMENT IN ECYT1</scope>
</reference>
<reference key="29">
    <citation type="journal article" date="1994" name="Exp. Hematol.">
        <title>Mutation in the negative regulatory element of the erythropoietin receptor gene in a case of sporadic primary polycythemia.</title>
        <authorList>
            <person name="Sokol L."/>
            <person name="Prchal J.F."/>
            <person name="D'Andrea A."/>
            <person name="Rado T.A."/>
            <person name="Prchal J.T."/>
        </authorList>
    </citation>
    <scope>VARIANT SER-488</scope>
</reference>
<reference key="30">
    <citation type="journal article" date="1996" name="Blood">
        <title>Missense mutation of the erythropoietin receptor is a rare event in human erythroid malignancies.</title>
        <authorList>
            <person name="Le Couedic J.-P."/>
            <person name="Mitjavila M.-T."/>
            <person name="Villeval J.-L."/>
            <person name="Feger F."/>
            <person name="Gobert S."/>
            <person name="Mayeux P."/>
            <person name="Casadevall N."/>
            <person name="Vainchenker W."/>
        </authorList>
    </citation>
    <scope>VARIANT ECYT1 SER-487</scope>
    <scope>VARIANT ERYTHROLEUKEMIA SER-487</scope>
</reference>
<reference key="31">
    <citation type="journal article" date="2016" name="Nature">
        <title>Analysis of protein-coding genetic variation in 60,706 humans.</title>
        <authorList>
            <consortium name="Exome Aggregation Consortium"/>
            <person name="Lek M."/>
            <person name="Karczewski K.J."/>
            <person name="Minikel E.V."/>
            <person name="Samocha K.E."/>
            <person name="Banks E."/>
            <person name="Fennell T."/>
            <person name="O'Donnell-Luria A.H."/>
            <person name="Ware J.S."/>
            <person name="Hill A.J."/>
            <person name="Cummings B.B."/>
            <person name="Tukiainen T."/>
            <person name="Birnbaum D.P."/>
            <person name="Kosmicki J.A."/>
            <person name="Duncan L.E."/>
            <person name="Estrada K."/>
            <person name="Zhao F."/>
            <person name="Zou J."/>
            <person name="Pierce-Hoffman E."/>
            <person name="Berghout J."/>
            <person name="Cooper D.N."/>
            <person name="Deflaux N."/>
            <person name="DePristo M."/>
            <person name="Do R."/>
            <person name="Flannick J."/>
            <person name="Fromer M."/>
            <person name="Gauthier L."/>
            <person name="Goldstein J."/>
            <person name="Gupta N."/>
            <person name="Howrigan D."/>
            <person name="Kiezun A."/>
            <person name="Kurki M.I."/>
            <person name="Moonshine A.L."/>
            <person name="Natarajan P."/>
            <person name="Orozco L."/>
            <person name="Peloso G.M."/>
            <person name="Poplin R."/>
            <person name="Rivas M.A."/>
            <person name="Ruano-Rubio V."/>
            <person name="Rose S.A."/>
            <person name="Ruderfer D.M."/>
            <person name="Shakir K."/>
            <person name="Stenson P.D."/>
            <person name="Stevens C."/>
            <person name="Thomas B.P."/>
            <person name="Tiao G."/>
            <person name="Tusie-Luna M.T."/>
            <person name="Weisburd B."/>
            <person name="Won H.H."/>
            <person name="Yu D."/>
            <person name="Altshuler D.M."/>
            <person name="Ardissino D."/>
            <person name="Boehnke M."/>
            <person name="Danesh J."/>
            <person name="Donnelly S."/>
            <person name="Elosua R."/>
            <person name="Florez J.C."/>
            <person name="Gabriel S.B."/>
            <person name="Getz G."/>
            <person name="Glatt S.J."/>
            <person name="Hultman C.M."/>
            <person name="Kathiresan S."/>
            <person name="Laakso M."/>
            <person name="McCarroll S."/>
            <person name="McCarthy M.I."/>
            <person name="McGovern D."/>
            <person name="McPherson R."/>
            <person name="Neale B.M."/>
            <person name="Palotie A."/>
            <person name="Purcell S.M."/>
            <person name="Saleheen D."/>
            <person name="Scharf J.M."/>
            <person name="Sklar P."/>
            <person name="Sullivan P.F."/>
            <person name="Tuomilehto J."/>
            <person name="Tsuang M.T."/>
            <person name="Watkins H.C."/>
            <person name="Wilson J.G."/>
            <person name="Daly M.J."/>
            <person name="MacArthur D.G."/>
        </authorList>
    </citation>
    <scope>VARIANT SER-488</scope>
</reference>
<keyword id="KW-0002">3D-structure</keyword>
<keyword id="KW-0025">Alternative splicing</keyword>
<keyword id="KW-1003">Cell membrane</keyword>
<keyword id="KW-0985">Congenital erythrocytosis</keyword>
<keyword id="KW-0225">Disease variant</keyword>
<keyword id="KW-1015">Disulfide bond</keyword>
<keyword id="KW-0325">Glycoprotein</keyword>
<keyword id="KW-1017">Isopeptide bond</keyword>
<keyword id="KW-0472">Membrane</keyword>
<keyword id="KW-0597">Phosphoprotein</keyword>
<keyword id="KW-1267">Proteomics identification</keyword>
<keyword id="KW-0675">Receptor</keyword>
<keyword id="KW-1185">Reference proteome</keyword>
<keyword id="KW-0964">Secreted</keyword>
<keyword id="KW-0732">Signal</keyword>
<keyword id="KW-0812">Transmembrane</keyword>
<keyword id="KW-1133">Transmembrane helix</keyword>
<keyword id="KW-0832">Ubl conjugation</keyword>
<comment type="function">
    <text evidence="1 7 9 15 16 24 25">Receptor for erythropoietin, which mediates erythropoietin-induced erythroblast proliferation and differentiation (PubMed:10388848, PubMed:2163695, PubMed:2163696, PubMed:8662939, PubMed:9774108). Upon EPO stimulation, EPOR dimerizes triggering the JAK2/STAT5 signaling cascade (By similarity). In some cell types, can also activate STAT1 and STAT3 (PubMed:11756159). May also activate the LYN tyrosine kinase (By similarity).</text>
</comment>
<comment type="function">
    <molecule>Isoform EPOR-T</molecule>
    <text evidence="14">Acts as a dominant-negative receptor of EPOR-mediated signaling.</text>
</comment>
<comment type="subunit">
    <text evidence="1 6 7 11 12 17 20 25 26">Forms homodimers on EPO stimulation (PubMed:10388848, PubMed:9774108, PubMed:9974392). The tyrosine-phosphorylated form interacts with several SH2 domain-containing proteins including LYN, the adapter protein SH2B2, PTPN6, PTPN11, JAK2, PI3 kinases, STAT5A/B, SOCS3, CRKL (PubMed:12027890, PubMed:7534299). Interacts with INPP5D/SHIP1 (By similarity). SH2B2 binding inhibits the JAK-STAT signaling (PubMed:10374881). Interacts with RHEX; this interaction occurs in a erythropoietin (EPO)-dependent manner (PubMed:25092874). Interacts with ATXN2L (PubMed:11784712).</text>
</comment>
<comment type="interaction">
    <interactant intactId="EBI-617321">
        <id>P19235</id>
    </interactant>
    <interactant intactId="EBI-948363">
        <id>Q8WWM7</id>
        <label>ATXN2L</label>
    </interactant>
    <organismsDiffer>false</organismsDiffer>
    <experiments>2</experiments>
</comment>
<comment type="interaction">
    <interactant intactId="EBI-617321">
        <id>P19235</id>
    </interactant>
    <interactant intactId="EBI-1027362">
        <id>P01588</id>
        <label>EPO</label>
    </interactant>
    <organismsDiffer>false</organismsDiffer>
    <experiments>3</experiments>
</comment>
<comment type="interaction">
    <interactant intactId="EBI-617321">
        <id>P19235</id>
    </interactant>
    <interactant intactId="EBI-11508463">
        <id>PRO_0000008401</id>
        <label>EPO</label>
        <dbReference type="UniProtKB" id="P01588"/>
    </interactant>
    <organismsDiffer>false</organismsDiffer>
    <experiments>2</experiments>
</comment>
<comment type="interaction">
    <interactant intactId="EBI-617321">
        <id>P19235</id>
    </interactant>
    <interactant intactId="EBI-617321">
        <id>P19235</id>
        <label>EPOR</label>
    </interactant>
    <organismsDiffer>false</organismsDiffer>
    <experiments>3</experiments>
</comment>
<comment type="interaction">
    <interactant intactId="EBI-617321">
        <id>P19235</id>
    </interactant>
    <interactant intactId="EBI-617403">
        <id>P16885</id>
        <label>PLCG2</label>
    </interactant>
    <organismsDiffer>false</organismsDiffer>
    <experiments>3</experiments>
</comment>
<comment type="interaction">
    <interactant intactId="EBI-617321">
        <id>P19235</id>
    </interactant>
    <interactant intactId="EBI-968788">
        <id>P18031</id>
        <label>PTPN1</label>
    </interactant>
    <organismsDiffer>false</organismsDiffer>
    <experiments>3</experiments>
</comment>
<comment type="interaction">
    <interactant intactId="EBI-617321">
        <id>P19235</id>
    </interactant>
    <interactant intactId="EBI-78260">
        <id>P29350</id>
        <label>PTPN6</label>
    </interactant>
    <organismsDiffer>false</organismsDiffer>
    <experiments>11</experiments>
</comment>
<comment type="interaction">
    <interactant intactId="EBI-617321">
        <id>P19235</id>
    </interactant>
    <interactant intactId="EBI-617737">
        <id>O14508</id>
        <label>SOCS2</label>
    </interactant>
    <organismsDiffer>false</organismsDiffer>
    <experiments>3</experiments>
</comment>
<comment type="interaction">
    <interactant intactId="EBI-617321">
        <id>P19235</id>
    </interactant>
    <interactant intactId="EBI-617489">
        <id>Q62225</id>
        <label>Cish</label>
    </interactant>
    <organismsDiffer>true</organismsDiffer>
    <experiments>4</experiments>
</comment>
<comment type="subcellular location">
    <subcellularLocation>
        <location evidence="1">Cell membrane</location>
        <topology evidence="3">Single-pass type I membrane protein</topology>
    </subcellularLocation>
</comment>
<comment type="subcellular location">
    <molecule>Isoform EPOR-S</molecule>
    <subcellularLocation>
        <location evidence="8">Secreted</location>
    </subcellularLocation>
    <text evidence="8">Secreted and located to the cell surface.</text>
</comment>
<comment type="alternative products">
    <event type="alternative splicing"/>
    <isoform>
        <id>P19235-1</id>
        <name evidence="27">EPOR-F</name>
        <name evidence="27">Full-length form</name>
        <sequence type="displayed"/>
    </isoform>
    <isoform>
        <id>P19235-2</id>
        <name evidence="27">EPOR-S</name>
        <name evidence="27">Soluble form</name>
        <sequence type="described" ref="VSP_009508 VSP_009509"/>
    </isoform>
    <isoform>
        <id>P19235-3</id>
        <name evidence="27">EPOR-T</name>
        <name evidence="27">Truncated form</name>
        <sequence type="described" ref="VSP_009510 VSP_009511"/>
    </isoform>
</comment>
<comment type="tissue specificity">
    <text evidence="16">Erythroid cells and erythroid progenitor cells.</text>
</comment>
<comment type="tissue specificity">
    <molecule>Isoform EPOR-F</molecule>
    <text evidence="14">Isoform EPOR-F is the most abundant form in EPO-dependent erythroleukemia cells and in late-stage erythroid progenitors.</text>
</comment>
<comment type="tissue specificity">
    <molecule>Isoform EPOR-S</molecule>
    <text evidence="14">Isoform EPOR-S and isoform EPOR-T are the predominant forms in bone marrow.</text>
</comment>
<comment type="tissue specificity">
    <molecule>Isoform EPOR-T</molecule>
    <text evidence="14">Isoform EPOR-S and isoform EPOR-T are the predominant forms in bone marrow (PubMed:1324524). Isoform EPOR-T is the most abundant from in early-stage erythroid progenitor cells (PubMed:1324524).</text>
</comment>
<comment type="domain">
    <text evidence="25">The WSXWS motif appears to be necessary for proper protein folding and thereby efficient intracellular transport and cell-surface receptor binding.</text>
</comment>
<comment type="domain">
    <text evidence="2">The box 1 motif is required for JAK interaction and/or activation.</text>
</comment>
<comment type="domain">
    <text evidence="1">Contains 1 copy of a cytoplasmic motif that is referred to as the immunoreceptor tyrosine-based inhibitor motif (ITIM). This motif is involved in modulation of cellular responses. The phosphorylated ITIM motif can bind the SH2 domain of several SH2-containing phosphatases.</text>
</comment>
<comment type="PTM">
    <text evidence="1 6 10 12">On EPO stimulation, phosphorylated on C-terminal tyrosine residues by JAK2 (PubMed:11781573). The phosphotyrosine motifs are also recruitment sites for several SH2-containing proteins and adapter proteins which mediate cell proliferation (PubMed:10374881). Phosphorylation on Tyr-454 is required for PTPN6 interaction, Tyr-426 for PTPN11 (By similarity). Tyr-426 is also required for SOCS3 binding, but Tyr-454/Tyr-456 motif is the preferred binding site (PubMed:12027890).</text>
</comment>
<comment type="PTM">
    <text evidence="1 10 13 19">Ubiquitinated by the ECS(SOCS2) complex following ligand-binding and phosphorylation by JAK2, leading to its degradation by the proteasome (PubMed:11781573, PubMed:31182716). Regulation by the ECS(SOCS2) complex acts as a negative feedback loop of erythropoietin-mediated signaling pathway (PubMed:11781573). Ubiquitination at Lys-281 mediates receptor internalization, whereas ubiquitination at Lys-453 promotes trafficking of activated receptors to the lysosomes for degradation (By similarity). Ubiquitinated by NOSIP; appears to be either multi-monoubiquitinated or polyubiquitinated (PubMed:12746455). Ubiquitination mediates proliferation and survival of EPO-dependent cells (By similarity).</text>
</comment>
<comment type="disease" evidence="22 23">
    <disease id="DI-00479">
        <name>Erythrocytosis, familial, 1</name>
        <acronym>ECYT1</acronym>
        <description>An autosomal dominant disorder characterized by elevated hemoglobin and hematocrit, hypersensitivity of erythroid progenitors to erythropoietin, erythropoietin low serum levels, and no increase in platelets nor leukocytes. It has a relatively benign course and does not progress to leukemia.</description>
        <dbReference type="MIM" id="133100"/>
    </disease>
    <text>The disease is caused by variants affecting the gene represented in this entry.</text>
</comment>
<comment type="similarity">
    <text evidence="29">Belongs to the type I cytokine receptor family. Type 1 subfamily.</text>
</comment>
<sequence>MDHLGASLWPQVGSLCLLLAGAAWAPPPNLPDPKFESKAALLAARGPEELLCFTERLEDLVCFWEEAASAGVGPGNYSFSYQLEDEPWKLCRLHQAPTARGAVRFWCSLPTADTSSFVPLELRVTAASGAPRYHRVIHINEVVLLDAPVGLVARLADESGHVVLRWLPPPETPMTSHIRYEVDVSAGNGAGSVQRVEILEGRTECVLSNLRGRTRYTFAVRARMAEPSFGGFWSAWSEPVSLLTPSDLDPLILTLSLILVVILVLLTVLALLSHRRALKQKIWPGIPSPESEFEGLFTTHKGNFQLWLYQNDGCLWWSPCTPFTEDPPASLEVLSERCWGTMQAVEPGTDDEGPLLEPVGSEHAQDTYLVLDKWLLPRNPPSEDLPGPGGSVDIVAMDEGSEASSCSSALASKPSPEGASAASFEYTILDPSSQLLRPWTLCPELPPTPPHLKYLYLVVSDSGISTDYSSGDSQGAQGGLSDGPYSNPYENSLIPAAEPLPPSYVACS</sequence>
<accession>P19235</accession>
<accession>B2RCG4</accession>
<accession>Q15443</accession>
<accession>Q2M205</accession>
<proteinExistence type="evidence at protein level"/>
<evidence type="ECO:0000250" key="1">
    <source>
        <dbReference type="UniProtKB" id="P14753"/>
    </source>
</evidence>
<evidence type="ECO:0000250" key="2">
    <source>
        <dbReference type="UniProtKB" id="P16310"/>
    </source>
</evidence>
<evidence type="ECO:0000255" key="3"/>
<evidence type="ECO:0000255" key="4">
    <source>
        <dbReference type="PROSITE-ProRule" id="PRU00316"/>
    </source>
</evidence>
<evidence type="ECO:0000256" key="5">
    <source>
        <dbReference type="SAM" id="MobiDB-lite"/>
    </source>
</evidence>
<evidence type="ECO:0000269" key="6">
    <source>
    </source>
</evidence>
<evidence type="ECO:0000269" key="7">
    <source>
    </source>
</evidence>
<evidence type="ECO:0000269" key="8">
    <source>
    </source>
</evidence>
<evidence type="ECO:0000269" key="9">
    <source>
    </source>
</evidence>
<evidence type="ECO:0000269" key="10">
    <source>
    </source>
</evidence>
<evidence type="ECO:0000269" key="11">
    <source>
    </source>
</evidence>
<evidence type="ECO:0000269" key="12">
    <source>
    </source>
</evidence>
<evidence type="ECO:0000269" key="13">
    <source>
    </source>
</evidence>
<evidence type="ECO:0000269" key="14">
    <source>
    </source>
</evidence>
<evidence type="ECO:0000269" key="15">
    <source>
    </source>
</evidence>
<evidence type="ECO:0000269" key="16">
    <source>
    </source>
</evidence>
<evidence type="ECO:0000269" key="17">
    <source>
    </source>
</evidence>
<evidence type="ECO:0000269" key="18">
    <source>
    </source>
</evidence>
<evidence type="ECO:0000269" key="19">
    <source>
    </source>
</evidence>
<evidence type="ECO:0000269" key="20">
    <source>
    </source>
</evidence>
<evidence type="ECO:0000269" key="21">
    <source>
    </source>
</evidence>
<evidence type="ECO:0000269" key="22">
    <source>
    </source>
</evidence>
<evidence type="ECO:0000269" key="23">
    <source>
    </source>
</evidence>
<evidence type="ECO:0000269" key="24">
    <source>
    </source>
</evidence>
<evidence type="ECO:0000269" key="25">
    <source>
    </source>
</evidence>
<evidence type="ECO:0000269" key="26">
    <source>
    </source>
</evidence>
<evidence type="ECO:0000303" key="27">
    <source>
    </source>
</evidence>
<evidence type="ECO:0000303" key="28">
    <source>
    </source>
</evidence>
<evidence type="ECO:0000305" key="29"/>
<evidence type="ECO:0000312" key="30">
    <source>
        <dbReference type="HGNC" id="HGNC:3416"/>
    </source>
</evidence>
<evidence type="ECO:0007744" key="31">
    <source>
        <dbReference type="PDB" id="1CN4"/>
    </source>
</evidence>
<evidence type="ECO:0007744" key="32">
    <source>
        <dbReference type="PDB" id="1EER"/>
    </source>
</evidence>
<evidence type="ECO:0007744" key="33">
    <source>
        <dbReference type="PDB" id="6I4X"/>
    </source>
</evidence>
<evidence type="ECO:0007829" key="34">
    <source>
        <dbReference type="PDB" id="1CN4"/>
    </source>
</evidence>
<evidence type="ECO:0007829" key="35">
    <source>
        <dbReference type="PDB" id="1EER"/>
    </source>
</evidence>
<evidence type="ECO:0007829" key="36">
    <source>
        <dbReference type="PDB" id="1ERN"/>
    </source>
</evidence>
<evidence type="ECO:0007829" key="37">
    <source>
        <dbReference type="PDB" id="2MV6"/>
    </source>
</evidence>
<evidence type="ECO:0007829" key="38">
    <source>
        <dbReference type="PDB" id="4Y5Y"/>
    </source>
</evidence>
<evidence type="ECO:0007829" key="39">
    <source>
        <dbReference type="PDB" id="6E2Q"/>
    </source>
</evidence>
<evidence type="ECO:0007829" key="40">
    <source>
        <dbReference type="PDB" id="6MOF"/>
    </source>
</evidence>
<evidence type="ECO:0007829" key="41">
    <source>
        <dbReference type="PDB" id="6MOJ"/>
    </source>
</evidence>
<dbReference type="EMBL" id="M60459">
    <property type="protein sequence ID" value="AAA52403.1"/>
    <property type="molecule type" value="mRNA"/>
</dbReference>
<dbReference type="EMBL" id="S45332">
    <property type="protein sequence ID" value="AAB23271.1"/>
    <property type="molecule type" value="Genomic_DNA"/>
</dbReference>
<dbReference type="EMBL" id="M34986">
    <property type="protein sequence ID" value="AAA52401.1"/>
    <property type="molecule type" value="mRNA"/>
</dbReference>
<dbReference type="EMBL" id="AK315097">
    <property type="protein sequence ID" value="BAG37561.1"/>
    <property type="molecule type" value="mRNA"/>
</dbReference>
<dbReference type="EMBL" id="CH471106">
    <property type="protein sequence ID" value="EAW84205.1"/>
    <property type="molecule type" value="Genomic_DNA"/>
</dbReference>
<dbReference type="EMBL" id="BC112153">
    <property type="protein sequence ID" value="AAI12154.1"/>
    <property type="molecule type" value="mRNA"/>
</dbReference>
<dbReference type="EMBL" id="M76595">
    <property type="protein sequence ID" value="AAA52393.1"/>
    <property type="molecule type" value="Genomic_DNA"/>
</dbReference>
<dbReference type="EMBL" id="M77244">
    <property type="protein sequence ID" value="AAA52392.1"/>
    <property type="molecule type" value="Genomic_DNA"/>
</dbReference>
<dbReference type="EMBL" id="X57282">
    <property type="protein sequence ID" value="CAA40550.1"/>
    <property type="molecule type" value="mRNA"/>
</dbReference>
<dbReference type="CCDS" id="CCDS12260.1">
    <molecule id="P19235-1"/>
</dbReference>
<dbReference type="PIR" id="A43799">
    <property type="entry name" value="ZUHUR"/>
</dbReference>
<dbReference type="PIR" id="I38208">
    <property type="entry name" value="I38208"/>
</dbReference>
<dbReference type="RefSeq" id="NP_000112.1">
    <molecule id="P19235-1"/>
    <property type="nucleotide sequence ID" value="NM_000121.4"/>
</dbReference>
<dbReference type="PDB" id="1CN4">
    <property type="method" value="X-ray"/>
    <property type="resolution" value="2.80 A"/>
    <property type="chains" value="A/B=25-249"/>
</dbReference>
<dbReference type="PDB" id="1EBA">
    <property type="method" value="X-ray"/>
    <property type="resolution" value="2.70 A"/>
    <property type="chains" value="A/B=34-248"/>
</dbReference>
<dbReference type="PDB" id="1EBP">
    <property type="method" value="X-ray"/>
    <property type="resolution" value="2.80 A"/>
    <property type="chains" value="A/B=34-244"/>
</dbReference>
<dbReference type="PDB" id="1EER">
    <property type="method" value="X-ray"/>
    <property type="resolution" value="1.90 A"/>
    <property type="chains" value="B/C=27-250"/>
</dbReference>
<dbReference type="PDB" id="1ERN">
    <property type="method" value="X-ray"/>
    <property type="resolution" value="2.40 A"/>
    <property type="chains" value="A/B=34-246"/>
</dbReference>
<dbReference type="PDB" id="2JIX">
    <property type="method" value="X-ray"/>
    <property type="resolution" value="3.20 A"/>
    <property type="chains" value="B/C/E=25-249"/>
</dbReference>
<dbReference type="PDB" id="2MV6">
    <property type="method" value="NMR"/>
    <property type="chains" value="A=237-284"/>
</dbReference>
<dbReference type="PDB" id="4Y5V">
    <property type="method" value="X-ray"/>
    <property type="resolution" value="2.60 A"/>
    <property type="chains" value="C/F/I=32-249"/>
</dbReference>
<dbReference type="PDB" id="4Y5X">
    <property type="method" value="X-ray"/>
    <property type="resolution" value="3.15 A"/>
    <property type="chains" value="C/F/I/L=32-249"/>
</dbReference>
<dbReference type="PDB" id="4Y5Y">
    <property type="method" value="X-ray"/>
    <property type="resolution" value="2.85 A"/>
    <property type="chains" value="C/F=32-249"/>
</dbReference>
<dbReference type="PDB" id="6E2Q">
    <property type="method" value="X-ray"/>
    <property type="resolution" value="2.65 A"/>
    <property type="chains" value="M/N/O/P=273-338"/>
</dbReference>
<dbReference type="PDB" id="6I4X">
    <property type="method" value="X-ray"/>
    <property type="resolution" value="2.69 A"/>
    <property type="chains" value="D=422-432"/>
</dbReference>
<dbReference type="PDB" id="6MOE">
    <property type="method" value="X-ray"/>
    <property type="resolution" value="2.09 A"/>
    <property type="chains" value="C/D=32-249"/>
</dbReference>
<dbReference type="PDB" id="6MOF">
    <property type="method" value="X-ray"/>
    <property type="resolution" value="2.89 A"/>
    <property type="chains" value="B=32-249"/>
</dbReference>
<dbReference type="PDB" id="6MOH">
    <property type="method" value="X-ray"/>
    <property type="resolution" value="3.20 A"/>
    <property type="chains" value="C/D=32-249"/>
</dbReference>
<dbReference type="PDB" id="6MOI">
    <property type="method" value="X-ray"/>
    <property type="resolution" value="2.06 A"/>
    <property type="chains" value="B=32-249"/>
</dbReference>
<dbReference type="PDB" id="6MOJ">
    <property type="method" value="X-ray"/>
    <property type="resolution" value="2.43 A"/>
    <property type="chains" value="B=32-249"/>
</dbReference>
<dbReference type="PDB" id="6MOK">
    <property type="method" value="X-ray"/>
    <property type="resolution" value="5.10 A"/>
    <property type="chains" value="B=32-249"/>
</dbReference>
<dbReference type="PDB" id="6MOL">
    <property type="method" value="X-ray"/>
    <property type="resolution" value="3.16 A"/>
    <property type="chains" value="B/C=32-249"/>
</dbReference>
<dbReference type="PDB" id="8VUI">
    <property type="method" value="X-ray"/>
    <property type="resolution" value="2.10 A"/>
    <property type="chains" value="D=25-250"/>
</dbReference>
<dbReference type="PDB" id="8VVM">
    <property type="method" value="X-ray"/>
    <property type="resolution" value="2.90 A"/>
    <property type="chains" value="I=25-250"/>
</dbReference>
<dbReference type="PDB" id="8VVO">
    <property type="method" value="X-ray"/>
    <property type="resolution" value="3.09 A"/>
    <property type="chains" value="I=25-250"/>
</dbReference>
<dbReference type="PDBsum" id="1CN4"/>
<dbReference type="PDBsum" id="1EBA"/>
<dbReference type="PDBsum" id="1EBP"/>
<dbReference type="PDBsum" id="1EER"/>
<dbReference type="PDBsum" id="1ERN"/>
<dbReference type="PDBsum" id="2JIX"/>
<dbReference type="PDBsum" id="2MV6"/>
<dbReference type="PDBsum" id="4Y5V"/>
<dbReference type="PDBsum" id="4Y5X"/>
<dbReference type="PDBsum" id="4Y5Y"/>
<dbReference type="PDBsum" id="6E2Q"/>
<dbReference type="PDBsum" id="6I4X"/>
<dbReference type="PDBsum" id="6MOE"/>
<dbReference type="PDBsum" id="6MOF"/>
<dbReference type="PDBsum" id="6MOH"/>
<dbReference type="PDBsum" id="6MOI"/>
<dbReference type="PDBsum" id="6MOJ"/>
<dbReference type="PDBsum" id="6MOK"/>
<dbReference type="PDBsum" id="6MOL"/>
<dbReference type="PDBsum" id="8VUI"/>
<dbReference type="PDBsum" id="8VVM"/>
<dbReference type="PDBsum" id="8VVO"/>
<dbReference type="BMRB" id="P19235"/>
<dbReference type="SMR" id="P19235"/>
<dbReference type="BioGRID" id="108371">
    <property type="interactions" value="37"/>
</dbReference>
<dbReference type="CORUM" id="P19235"/>
<dbReference type="DIP" id="DIP-5732N"/>
<dbReference type="ELM" id="P19235"/>
<dbReference type="FunCoup" id="P19235">
    <property type="interactions" value="803"/>
</dbReference>
<dbReference type="IntAct" id="P19235">
    <property type="interactions" value="21"/>
</dbReference>
<dbReference type="MINT" id="P19235"/>
<dbReference type="STRING" id="9606.ENSP00000222139"/>
<dbReference type="BindingDB" id="P19235"/>
<dbReference type="ChEMBL" id="CHEMBL1817"/>
<dbReference type="DrugBank" id="DB13006">
    <property type="generic name" value="Cibinetide"/>
</dbReference>
<dbReference type="DrugBank" id="DB00012">
    <property type="generic name" value="Darbepoetin alfa"/>
</dbReference>
<dbReference type="DrugBank" id="DB07637">
    <property type="generic name" value="Dibromotyrosine"/>
</dbReference>
<dbReference type="DrugBank" id="DB00016">
    <property type="generic name" value="Erythropoietin"/>
</dbReference>
<dbReference type="DrugBank" id="DB00678">
    <property type="generic name" value="Losartan"/>
</dbReference>
<dbReference type="DrugBank" id="DB09107">
    <property type="generic name" value="Methoxy polyethylene glycol-epoetin beta"/>
</dbReference>
<dbReference type="DrugBank" id="DB08894">
    <property type="generic name" value="Peginesatide"/>
</dbReference>
<dbReference type="DrugCentral" id="P19235"/>
<dbReference type="GuidetoPHARMACOLOGY" id="1718"/>
<dbReference type="TCDB" id="8.A.152.1.12">
    <property type="family name" value="the interleukin receptor (ilr) family"/>
</dbReference>
<dbReference type="GlyCosmos" id="P19235">
    <property type="glycosylation" value="1 site, No reported glycans"/>
</dbReference>
<dbReference type="GlyGen" id="P19235">
    <property type="glycosylation" value="2 sites"/>
</dbReference>
<dbReference type="iPTMnet" id="P19235"/>
<dbReference type="PhosphoSitePlus" id="P19235"/>
<dbReference type="BioMuta" id="EPOR"/>
<dbReference type="DMDM" id="119524"/>
<dbReference type="jPOST" id="P19235"/>
<dbReference type="MassIVE" id="P19235"/>
<dbReference type="PaxDb" id="9606-ENSP00000222139"/>
<dbReference type="PeptideAtlas" id="P19235"/>
<dbReference type="ProteomicsDB" id="53638">
    <molecule id="P19235-1"/>
</dbReference>
<dbReference type="ProteomicsDB" id="53640">
    <molecule id="P19235-3"/>
</dbReference>
<dbReference type="TopDownProteomics" id="P19235-3">
    <molecule id="P19235-3"/>
</dbReference>
<dbReference type="ABCD" id="P19235">
    <property type="antibodies" value="9 sequenced antibodies"/>
</dbReference>
<dbReference type="Antibodypedia" id="13130">
    <property type="antibodies" value="1018 antibodies from 39 providers"/>
</dbReference>
<dbReference type="DNASU" id="2057"/>
<dbReference type="Ensembl" id="ENST00000222139.11">
    <molecule id="P19235-1"/>
    <property type="protein sequence ID" value="ENSP00000222139.5"/>
    <property type="gene ID" value="ENSG00000187266.14"/>
</dbReference>
<dbReference type="Ensembl" id="ENST00000592375.6">
    <molecule id="P19235-3"/>
    <property type="protein sequence ID" value="ENSP00000467809.2"/>
    <property type="gene ID" value="ENSG00000187266.14"/>
</dbReference>
<dbReference type="GeneID" id="2057"/>
<dbReference type="KEGG" id="hsa:2057"/>
<dbReference type="MANE-Select" id="ENST00000222139.11">
    <property type="protein sequence ID" value="ENSP00000222139.5"/>
    <property type="RefSeq nucleotide sequence ID" value="NM_000121.4"/>
    <property type="RefSeq protein sequence ID" value="NP_000112.1"/>
</dbReference>
<dbReference type="UCSC" id="uc002mrj.3">
    <molecule id="P19235-1"/>
    <property type="organism name" value="human"/>
</dbReference>
<dbReference type="AGR" id="HGNC:3416"/>
<dbReference type="CTD" id="2057"/>
<dbReference type="DisGeNET" id="2057"/>
<dbReference type="GeneCards" id="EPOR"/>
<dbReference type="GeneReviews" id="EPOR"/>
<dbReference type="HGNC" id="HGNC:3416">
    <property type="gene designation" value="EPOR"/>
</dbReference>
<dbReference type="HPA" id="ENSG00000187266">
    <property type="expression patterns" value="Low tissue specificity"/>
</dbReference>
<dbReference type="MalaCards" id="EPOR"/>
<dbReference type="MIM" id="133100">
    <property type="type" value="phenotype"/>
</dbReference>
<dbReference type="MIM" id="133171">
    <property type="type" value="gene"/>
</dbReference>
<dbReference type="neXtProt" id="NX_P19235"/>
<dbReference type="OpenTargets" id="ENSG00000187266"/>
<dbReference type="Orphanet" id="90042">
    <property type="disease" value="Primary familial polycythemia"/>
</dbReference>
<dbReference type="PharmGKB" id="PA27834"/>
<dbReference type="VEuPathDB" id="HostDB:ENSG00000187266"/>
<dbReference type="eggNOG" id="ENOG502RYHW">
    <property type="taxonomic scope" value="Eukaryota"/>
</dbReference>
<dbReference type="GeneTree" id="ENSGT00940000160315"/>
<dbReference type="HOGENOM" id="CLU_041434_0_0_1"/>
<dbReference type="InParanoid" id="P19235"/>
<dbReference type="OMA" id="ERCWGTM"/>
<dbReference type="OrthoDB" id="9890439at2759"/>
<dbReference type="PAN-GO" id="P19235">
    <property type="GO annotations" value="5 GO annotations based on evolutionary models"/>
</dbReference>
<dbReference type="PhylomeDB" id="P19235"/>
<dbReference type="TreeFam" id="TF336573"/>
<dbReference type="PathwayCommons" id="P19235"/>
<dbReference type="Reactome" id="R-HSA-9006335">
    <property type="pathway name" value="Signaling by Erythropoietin"/>
</dbReference>
<dbReference type="Reactome" id="R-HSA-9027276">
    <property type="pathway name" value="Erythropoietin activates Phosphoinositide-3-kinase (PI3K)"/>
</dbReference>
<dbReference type="Reactome" id="R-HSA-9027277">
    <property type="pathway name" value="Erythropoietin activates Phospholipase C gamma (PLCG)"/>
</dbReference>
<dbReference type="Reactome" id="R-HSA-9027283">
    <property type="pathway name" value="Erythropoietin activates STAT5"/>
</dbReference>
<dbReference type="Reactome" id="R-HSA-9027284">
    <property type="pathway name" value="Erythropoietin activates RAS"/>
</dbReference>
<dbReference type="SignaLink" id="P19235"/>
<dbReference type="SIGNOR" id="P19235"/>
<dbReference type="BioGRID-ORCS" id="2057">
    <property type="hits" value="18 hits in 1166 CRISPR screens"/>
</dbReference>
<dbReference type="ChiTaRS" id="EPOR">
    <property type="organism name" value="human"/>
</dbReference>
<dbReference type="EvolutionaryTrace" id="P19235"/>
<dbReference type="GeneWiki" id="Erythropoietin_receptor"/>
<dbReference type="GenomeRNAi" id="2057"/>
<dbReference type="Pharos" id="P19235">
    <property type="development level" value="Tclin"/>
</dbReference>
<dbReference type="PRO" id="PR:P19235"/>
<dbReference type="Proteomes" id="UP000005640">
    <property type="component" value="Chromosome 19"/>
</dbReference>
<dbReference type="RNAct" id="P19235">
    <property type="molecule type" value="protein"/>
</dbReference>
<dbReference type="Bgee" id="ENSG00000187266">
    <property type="expression patterns" value="Expressed in type B pancreatic cell and 186 other cell types or tissues"/>
</dbReference>
<dbReference type="ExpressionAtlas" id="P19235">
    <property type="expression patterns" value="baseline and differential"/>
</dbReference>
<dbReference type="GO" id="GO:0009897">
    <property type="term" value="C:external side of plasma membrane"/>
    <property type="evidence" value="ECO:0000318"/>
    <property type="project" value="GO_Central"/>
</dbReference>
<dbReference type="GO" id="GO:0005576">
    <property type="term" value="C:extracellular region"/>
    <property type="evidence" value="ECO:0007669"/>
    <property type="project" value="UniProtKB-SubCell"/>
</dbReference>
<dbReference type="GO" id="GO:0016607">
    <property type="term" value="C:nuclear speck"/>
    <property type="evidence" value="ECO:0000314"/>
    <property type="project" value="HPA"/>
</dbReference>
<dbReference type="GO" id="GO:0005886">
    <property type="term" value="C:plasma membrane"/>
    <property type="evidence" value="ECO:0000314"/>
    <property type="project" value="HPA"/>
</dbReference>
<dbReference type="GO" id="GO:0004900">
    <property type="term" value="F:erythropoietin receptor activity"/>
    <property type="evidence" value="ECO:0000314"/>
    <property type="project" value="UniProtKB"/>
</dbReference>
<dbReference type="GO" id="GO:0042802">
    <property type="term" value="F:identical protein binding"/>
    <property type="evidence" value="ECO:0000353"/>
    <property type="project" value="IntAct"/>
</dbReference>
<dbReference type="GO" id="GO:0007420">
    <property type="term" value="P:brain development"/>
    <property type="evidence" value="ECO:0007669"/>
    <property type="project" value="Ensembl"/>
</dbReference>
<dbReference type="GO" id="GO:0019221">
    <property type="term" value="P:cytokine-mediated signaling pathway"/>
    <property type="evidence" value="ECO:0000318"/>
    <property type="project" value="GO_Central"/>
</dbReference>
<dbReference type="GO" id="GO:0046697">
    <property type="term" value="P:decidualization"/>
    <property type="evidence" value="ECO:0007669"/>
    <property type="project" value="Ensembl"/>
</dbReference>
<dbReference type="GO" id="GO:0038162">
    <property type="term" value="P:erythropoietin-mediated signaling pathway"/>
    <property type="evidence" value="ECO:0000314"/>
    <property type="project" value="UniProtKB"/>
</dbReference>
<dbReference type="GO" id="GO:0007507">
    <property type="term" value="P:heart development"/>
    <property type="evidence" value="ECO:0007669"/>
    <property type="project" value="Ensembl"/>
</dbReference>
<dbReference type="GO" id="GO:0008284">
    <property type="term" value="P:positive regulation of cell population proliferation"/>
    <property type="evidence" value="ECO:0000318"/>
    <property type="project" value="GO_Central"/>
</dbReference>
<dbReference type="GO" id="GO:0007165">
    <property type="term" value="P:signal transduction"/>
    <property type="evidence" value="ECO:0000303"/>
    <property type="project" value="ProtInc"/>
</dbReference>
<dbReference type="CDD" id="cd00063">
    <property type="entry name" value="FN3"/>
    <property type="match status" value="1"/>
</dbReference>
<dbReference type="FunFam" id="2.60.40.10:FF:001041">
    <property type="entry name" value="Erythropoietin receptor"/>
    <property type="match status" value="1"/>
</dbReference>
<dbReference type="FunFam" id="2.60.40.10:FF:001767">
    <property type="entry name" value="Erythropoietin receptor"/>
    <property type="match status" value="1"/>
</dbReference>
<dbReference type="Gene3D" id="2.60.40.10">
    <property type="entry name" value="Immunoglobulins"/>
    <property type="match status" value="2"/>
</dbReference>
<dbReference type="InterPro" id="IPR009167">
    <property type="entry name" value="Erythropoietin_rcpt"/>
</dbReference>
<dbReference type="InterPro" id="IPR003961">
    <property type="entry name" value="FN3_dom"/>
</dbReference>
<dbReference type="InterPro" id="IPR036116">
    <property type="entry name" value="FN3_sf"/>
</dbReference>
<dbReference type="InterPro" id="IPR015152">
    <property type="entry name" value="Growth/epo_recpt_lig-bind"/>
</dbReference>
<dbReference type="InterPro" id="IPR013783">
    <property type="entry name" value="Ig-like_fold"/>
</dbReference>
<dbReference type="InterPro" id="IPR003528">
    <property type="entry name" value="Long_hematopoietin_rcpt_CS"/>
</dbReference>
<dbReference type="PANTHER" id="PTHR23037">
    <property type="entry name" value="CYTOKINE RECEPTOR"/>
    <property type="match status" value="1"/>
</dbReference>
<dbReference type="PANTHER" id="PTHR23037:SF28">
    <property type="entry name" value="ERYTHROPOIETIN RECEPTOR"/>
    <property type="match status" value="1"/>
</dbReference>
<dbReference type="Pfam" id="PF09067">
    <property type="entry name" value="EpoR_lig-bind"/>
    <property type="match status" value="1"/>
</dbReference>
<dbReference type="Pfam" id="PF00041">
    <property type="entry name" value="fn3"/>
    <property type="match status" value="1"/>
</dbReference>
<dbReference type="PIRSF" id="PIRSF001959">
    <property type="entry name" value="EPO_receptor"/>
    <property type="match status" value="1"/>
</dbReference>
<dbReference type="SMART" id="SM00060">
    <property type="entry name" value="FN3"/>
    <property type="match status" value="1"/>
</dbReference>
<dbReference type="SUPFAM" id="SSF49265">
    <property type="entry name" value="Fibronectin type III"/>
    <property type="match status" value="2"/>
</dbReference>
<dbReference type="PROSITE" id="PS50853">
    <property type="entry name" value="FN3"/>
    <property type="match status" value="1"/>
</dbReference>
<dbReference type="PROSITE" id="PS01352">
    <property type="entry name" value="HEMATOPO_REC_L_F1"/>
    <property type="match status" value="1"/>
</dbReference>
<protein>
    <recommendedName>
        <fullName evidence="28">Erythropoietin receptor</fullName>
        <shortName evidence="28">EPO-R</shortName>
    </recommendedName>
</protein>
<organism>
    <name type="scientific">Homo sapiens</name>
    <name type="common">Human</name>
    <dbReference type="NCBI Taxonomy" id="9606"/>
    <lineage>
        <taxon>Eukaryota</taxon>
        <taxon>Metazoa</taxon>
        <taxon>Chordata</taxon>
        <taxon>Craniata</taxon>
        <taxon>Vertebrata</taxon>
        <taxon>Euteleostomi</taxon>
        <taxon>Mammalia</taxon>
        <taxon>Eutheria</taxon>
        <taxon>Euarchontoglires</taxon>
        <taxon>Primates</taxon>
        <taxon>Haplorrhini</taxon>
        <taxon>Catarrhini</taxon>
        <taxon>Hominidae</taxon>
        <taxon>Homo</taxon>
    </lineage>
</organism>